<keyword id="KW-0238">DNA-binding</keyword>
<keyword id="KW-0371">Homeobox</keyword>
<keyword id="KW-0539">Nucleus</keyword>
<keyword id="KW-1185">Reference proteome</keyword>
<keyword id="KW-0678">Repressor</keyword>
<keyword id="KW-0804">Transcription</keyword>
<keyword id="KW-0805">Transcription regulation</keyword>
<proteinExistence type="evidence at transcript level"/>
<gene>
    <name type="primary">TGIF1</name>
    <name type="synonym">TGIF</name>
</gene>
<protein>
    <recommendedName>
        <fullName>Homeobox protein TGIF1</fullName>
    </recommendedName>
    <alternativeName>
        <fullName>5'-TG-3'-interacting factor 1</fullName>
    </alternativeName>
</protein>
<name>TGIF1_PANTR</name>
<dbReference type="EMBL" id="AY665270">
    <property type="protein sequence ID" value="AAV74308.1"/>
    <property type="molecule type" value="mRNA"/>
</dbReference>
<dbReference type="RefSeq" id="NP_001009815.1">
    <property type="nucleotide sequence ID" value="NM_001009815.1"/>
</dbReference>
<dbReference type="BMRB" id="Q5IS58"/>
<dbReference type="SMR" id="Q5IS58"/>
<dbReference type="FunCoup" id="Q5IS58">
    <property type="interactions" value="1250"/>
</dbReference>
<dbReference type="STRING" id="9598.ENSPTRP00000016743"/>
<dbReference type="PaxDb" id="9598-ENSPTRP00000016743"/>
<dbReference type="Ensembl" id="ENSPTRT00000018072.4">
    <property type="protein sequence ID" value="ENSPTRP00000016743.3"/>
    <property type="gene ID" value="ENSPTRG00000009838.6"/>
</dbReference>
<dbReference type="GeneID" id="455312"/>
<dbReference type="KEGG" id="ptr:455312"/>
<dbReference type="CTD" id="7050"/>
<dbReference type="VGNC" id="VGNC:7335">
    <property type="gene designation" value="TGIF1"/>
</dbReference>
<dbReference type="eggNOG" id="KOG0773">
    <property type="taxonomic scope" value="Eukaryota"/>
</dbReference>
<dbReference type="GeneTree" id="ENSGT00940000155230"/>
<dbReference type="HOGENOM" id="CLU_034318_2_0_1"/>
<dbReference type="InParanoid" id="Q5IS58"/>
<dbReference type="OrthoDB" id="15371at9604"/>
<dbReference type="TreeFam" id="TF318093"/>
<dbReference type="Proteomes" id="UP000002277">
    <property type="component" value="Chromosome 18"/>
</dbReference>
<dbReference type="Bgee" id="ENSPTRG00000009838">
    <property type="expression patterns" value="Expressed in cortex of kidney and 21 other cell types or tissues"/>
</dbReference>
<dbReference type="GO" id="GO:0005634">
    <property type="term" value="C:nucleus"/>
    <property type="evidence" value="ECO:0007669"/>
    <property type="project" value="UniProtKB-SubCell"/>
</dbReference>
<dbReference type="GO" id="GO:0003677">
    <property type="term" value="F:DNA binding"/>
    <property type="evidence" value="ECO:0007669"/>
    <property type="project" value="UniProtKB-KW"/>
</dbReference>
<dbReference type="GO" id="GO:0001227">
    <property type="term" value="F:DNA-binding transcription repressor activity, RNA polymerase II-specific"/>
    <property type="evidence" value="ECO:0000318"/>
    <property type="project" value="GO_Central"/>
</dbReference>
<dbReference type="GO" id="GO:0000122">
    <property type="term" value="P:negative regulation of transcription by RNA polymerase II"/>
    <property type="evidence" value="ECO:0000318"/>
    <property type="project" value="GO_Central"/>
</dbReference>
<dbReference type="CDD" id="cd00086">
    <property type="entry name" value="homeodomain"/>
    <property type="match status" value="1"/>
</dbReference>
<dbReference type="FunFam" id="1.10.10.60:FF:000059">
    <property type="entry name" value="TGFB-induced factor homeobox 1"/>
    <property type="match status" value="1"/>
</dbReference>
<dbReference type="Gene3D" id="1.10.10.60">
    <property type="entry name" value="Homeodomain-like"/>
    <property type="match status" value="1"/>
</dbReference>
<dbReference type="InterPro" id="IPR001356">
    <property type="entry name" value="HD"/>
</dbReference>
<dbReference type="InterPro" id="IPR009057">
    <property type="entry name" value="Homeodomain-like_sf"/>
</dbReference>
<dbReference type="InterPro" id="IPR008422">
    <property type="entry name" value="KN_HD"/>
</dbReference>
<dbReference type="InterPro" id="IPR050224">
    <property type="entry name" value="TALE_homeobox"/>
</dbReference>
<dbReference type="PANTHER" id="PTHR11850">
    <property type="entry name" value="HOMEOBOX PROTEIN TRANSCRIPTION FACTORS"/>
    <property type="match status" value="1"/>
</dbReference>
<dbReference type="Pfam" id="PF05920">
    <property type="entry name" value="Homeobox_KN"/>
    <property type="match status" value="1"/>
</dbReference>
<dbReference type="SMART" id="SM00389">
    <property type="entry name" value="HOX"/>
    <property type="match status" value="1"/>
</dbReference>
<dbReference type="SUPFAM" id="SSF46689">
    <property type="entry name" value="Homeodomain-like"/>
    <property type="match status" value="1"/>
</dbReference>
<dbReference type="PROSITE" id="PS50071">
    <property type="entry name" value="HOMEOBOX_2"/>
    <property type="match status" value="1"/>
</dbReference>
<comment type="function">
    <text evidence="1">Binds to a retinoid X receptor (RXR) responsive element from the cellular retinol-binding protein II promoter (CRBPII-RXRE). Inhibits the 9-cis-retinoic acid-dependent RXR alpha transcription activation of the retinoic acid responsive element. Active transcriptional corepressor of SMAD2. Links the nodal signaling pathway to the bifurcation of the forebrain and the establishment of ventral midline structures. May participate in the transmission of nuclear signals during development and in the adult, as illustrated by the down-modulation of the RXR alpha activities (By similarity).</text>
</comment>
<comment type="subunit">
    <text evidence="1 2">Interacts with SMAD2 (By similarity). Interacts with CTBP, SMAD3 and HDAC1.</text>
</comment>
<comment type="subcellular location">
    <subcellularLocation>
        <location evidence="3">Nucleus</location>
    </subcellularLocation>
</comment>
<comment type="similarity">
    <text evidence="5">Belongs to the TALE/TGIF homeobox family.</text>
</comment>
<feature type="chain" id="PRO_0000049319" description="Homeobox protein TGIF1">
    <location>
        <begin position="1"/>
        <end position="401"/>
    </location>
</feature>
<feature type="DNA-binding region" description="Homeobox; TALE-type" evidence="3">
    <location>
        <begin position="164"/>
        <end position="226"/>
    </location>
</feature>
<feature type="region of interest" description="Disordered" evidence="4">
    <location>
        <begin position="1"/>
        <end position="20"/>
    </location>
</feature>
<feature type="region of interest" description="Disordered" evidence="4">
    <location>
        <begin position="78"/>
        <end position="127"/>
    </location>
</feature>
<feature type="region of interest" description="Disordered" evidence="4">
    <location>
        <begin position="139"/>
        <end position="170"/>
    </location>
</feature>
<feature type="short sequence motif" description="CTBP-binding motif">
    <location>
        <begin position="153"/>
        <end position="157"/>
    </location>
</feature>
<reference key="1">
    <citation type="journal article" date="2004" name="Cell">
        <title>Accelerated evolution of nervous system genes in the origin of Homo sapiens.</title>
        <authorList>
            <person name="Dorus S."/>
            <person name="Vallender E.J."/>
            <person name="Evans P.D."/>
            <person name="Anderson J.R."/>
            <person name="Gilbert S.L."/>
            <person name="Mahowald M."/>
            <person name="Wyckoff G.J."/>
            <person name="Malcom C.M."/>
            <person name="Lahn B.T."/>
        </authorList>
    </citation>
    <scope>NUCLEOTIDE SEQUENCE [MRNA]</scope>
</reference>
<sequence length="401" mass="43082">MVLAQSRVSAGVGSPHCSGSGGGGSDYFPWPASHPGNPQCSFSTAFLASPRLSRGTLAYLPPALWSSLATPSALLGSSCAPPPPPARCPQPRALSPELGTKAGPRRPHRWELPRSPSQGAQGPAPRRRLMETMKGIVAASGSETEDEDSMDIPLDLSSSAGSGKRRRRGNLPKESVQILRDWLYEHRYNAYPSEQEKALLSQQTHLSTLQVCNWFINARRRLLPDMLRKDGKDPNQFTISRRGAKISETSSVESVMGIKNFMPALEETPFHSCTAGPNPTLGRPLSPKPSSPGSVLARPSVICHTTVTALKDVPFSLCQSVGVGQSTDIQQIAANNFTDTSLMYPEDTCKSGPSTNTQSGLFNTPPPTPPDLNQDFSGFQLLVDVALKRAAEMELQAKLTA</sequence>
<accession>Q5IS58</accession>
<organism>
    <name type="scientific">Pan troglodytes</name>
    <name type="common">Chimpanzee</name>
    <dbReference type="NCBI Taxonomy" id="9598"/>
    <lineage>
        <taxon>Eukaryota</taxon>
        <taxon>Metazoa</taxon>
        <taxon>Chordata</taxon>
        <taxon>Craniata</taxon>
        <taxon>Vertebrata</taxon>
        <taxon>Euteleostomi</taxon>
        <taxon>Mammalia</taxon>
        <taxon>Eutheria</taxon>
        <taxon>Euarchontoglires</taxon>
        <taxon>Primates</taxon>
        <taxon>Haplorrhini</taxon>
        <taxon>Catarrhini</taxon>
        <taxon>Hominidae</taxon>
        <taxon>Pan</taxon>
    </lineage>
</organism>
<evidence type="ECO:0000250" key="1"/>
<evidence type="ECO:0000250" key="2">
    <source>
        <dbReference type="UniProtKB" id="Q15583"/>
    </source>
</evidence>
<evidence type="ECO:0000255" key="3">
    <source>
        <dbReference type="PROSITE-ProRule" id="PRU00108"/>
    </source>
</evidence>
<evidence type="ECO:0000256" key="4">
    <source>
        <dbReference type="SAM" id="MobiDB-lite"/>
    </source>
</evidence>
<evidence type="ECO:0000305" key="5"/>